<accession>O75437</accession>
<accession>A4QPC0</accession>
<accession>Q86XL7</accession>
<sequence length="659" mass="77160">MPGPPRSLEMGLLTFRDVAIEFSLEEWQHLDIAQQNLYRNVMLENYRNLAFLGIAVSKPDLITCLEQGKEPWNMKRHEMVDEPPGMCPHFAQDLWPEQGMEDSFQKAILRRYGKYGHENLQLRKGCKSVDEYKVNKEGYNGLNQCFTTAQSKVFQCDKYLKVFYKFLNSNRPKIRHTEKKSFKCKKRVKLFCMLSHKTQHKSIYHREKSYKCKECGKTFNWSSTLTNHRKIYTEEKPYKCEEYNKSPKQLSTLTTHEIIHAGEKLYKCEECGEAFNRSSNLTTHKIIHTGEKPYKCEECGKAFIWSSTLTEHKKIHTRKKPYKCEECGKAFIWSSTLTRHKRMHTGEKPYKCEECGKAFSQSSTLTTHKIIHTGEKRYKCLECGKAFKQLSTLTTHKIIHVGEKLYKCEECGKGFNRSSNLTTHKIIHTGEKPYKCEECGKAFIWSSTLTKHKRIHTREKPYKCEECGKAFIWSSTLTRHKRMHTGEKPYKCEECGKSFSQSSTLTTHKIIHTGEKPYKCEECGKAFNWSSTLTKHKIIHTEEKPYKCEKCGKAFKQSSILTNHKRIHTGEKPYKCEECGKSFNRSSTFTKHKVIHTGVKPYKCEECGKAFFWSSTLTKHKRIHTGEQPYKWEKFGKAFNRSSHLTTDKITHWREILQV</sequence>
<feature type="chain" id="PRO_0000047487" description="Zinc finger protein 254">
    <location>
        <begin position="1"/>
        <end position="659"/>
    </location>
</feature>
<feature type="domain" description="KRAB" evidence="2">
    <location>
        <begin position="13"/>
        <end position="84"/>
    </location>
</feature>
<feature type="zinc finger region" description="C2H2-type 1; degenerate" evidence="1">
    <location>
        <begin position="210"/>
        <end position="232"/>
    </location>
</feature>
<feature type="zinc finger region" description="C2H2-type 2; degenerate" evidence="1">
    <location>
        <begin position="238"/>
        <end position="260"/>
    </location>
</feature>
<feature type="zinc finger region" description="C2H2-type 3" evidence="1">
    <location>
        <begin position="266"/>
        <end position="288"/>
    </location>
</feature>
<feature type="zinc finger region" description="C2H2-type 4" evidence="1">
    <location>
        <begin position="294"/>
        <end position="316"/>
    </location>
</feature>
<feature type="zinc finger region" description="C2H2-type 5" evidence="1">
    <location>
        <begin position="322"/>
        <end position="344"/>
    </location>
</feature>
<feature type="zinc finger region" description="C2H2-type 6" evidence="1">
    <location>
        <begin position="350"/>
        <end position="372"/>
    </location>
</feature>
<feature type="zinc finger region" description="C2H2-type 7" evidence="1">
    <location>
        <begin position="378"/>
        <end position="400"/>
    </location>
</feature>
<feature type="zinc finger region" description="C2H2-type 8" evidence="1">
    <location>
        <begin position="406"/>
        <end position="428"/>
    </location>
</feature>
<feature type="zinc finger region" description="C2H2-type 9" evidence="1">
    <location>
        <begin position="434"/>
        <end position="456"/>
    </location>
</feature>
<feature type="zinc finger region" description="C2H2-type 10" evidence="1">
    <location>
        <begin position="462"/>
        <end position="484"/>
    </location>
</feature>
<feature type="zinc finger region" description="C2H2-type 11" evidence="1">
    <location>
        <begin position="490"/>
        <end position="512"/>
    </location>
</feature>
<feature type="zinc finger region" description="C2H2-type 12" evidence="1">
    <location>
        <begin position="518"/>
        <end position="540"/>
    </location>
</feature>
<feature type="zinc finger region" description="C2H2-type 13" evidence="1">
    <location>
        <begin position="546"/>
        <end position="568"/>
    </location>
</feature>
<feature type="zinc finger region" description="C2H2-type 14" evidence="1">
    <location>
        <begin position="574"/>
        <end position="596"/>
    </location>
</feature>
<feature type="zinc finger region" description="C2H2-type 15" evidence="1">
    <location>
        <begin position="602"/>
        <end position="624"/>
    </location>
</feature>
<feature type="splice variant" id="VSP_022010" description="In isoform 2." evidence="4">
    <location>
        <begin position="280"/>
        <end position="587"/>
    </location>
</feature>
<feature type="sequence variant" id="VAR_047461" description="In dbSNP:rs17854260." evidence="3">
    <original>D</original>
    <variation>G</variation>
    <location>
        <position position="93"/>
    </location>
</feature>
<feature type="sequence variant" id="VAR_047462" description="In dbSNP:rs403356.">
    <original>A</original>
    <variation>T</variation>
    <location>
        <position position="386"/>
    </location>
</feature>
<feature type="sequence variant" id="VAR_047463" description="In dbSNP:rs2925930.">
    <original>T</original>
    <variation>A</variation>
    <location>
        <position position="457"/>
    </location>
</feature>
<feature type="sequence variant" id="VAR_059906" description="In dbSNP:rs12611425." evidence="3">
    <original>K</original>
    <variation>N</variation>
    <location>
        <position position="537"/>
    </location>
</feature>
<feature type="sequence variant" id="VAR_047464" description="In dbSNP:rs2446056.">
    <original>V</original>
    <variation>I</variation>
    <location>
        <position position="594"/>
    </location>
</feature>
<feature type="sequence conflict" description="In Ref. 1; AAC39913." evidence="5" ref="1">
    <original>E</original>
    <variation>K</variation>
    <location>
        <position position="273"/>
    </location>
</feature>
<feature type="sequence conflict" description="In Ref. 1; AAC39913." evidence="5" ref="1">
    <original>WREILQV</original>
    <variation>TGEKSYKYE</variation>
    <location>
        <begin position="653"/>
        <end position="659"/>
    </location>
</feature>
<evidence type="ECO:0000255" key="1">
    <source>
        <dbReference type="PROSITE-ProRule" id="PRU00042"/>
    </source>
</evidence>
<evidence type="ECO:0000255" key="2">
    <source>
        <dbReference type="PROSITE-ProRule" id="PRU00119"/>
    </source>
</evidence>
<evidence type="ECO:0000269" key="3">
    <source>
    </source>
</evidence>
<evidence type="ECO:0000303" key="4">
    <source>
    </source>
</evidence>
<evidence type="ECO:0000305" key="5"/>
<reference key="1">
    <citation type="journal article" date="1998" name="Proc. Natl. Acad. Sci. U.S.A.">
        <title>Identification of genes expressed in human CD34(+) hematopoietic stem/progenitor cells by expressed sequence tags and efficient full-length cDNA cloning.</title>
        <authorList>
            <person name="Mao M."/>
            <person name="Fu G."/>
            <person name="Wu J.-S."/>
            <person name="Zhang Q.-H."/>
            <person name="Zhou J."/>
            <person name="Kan L.-X."/>
            <person name="Huang Q.-H."/>
            <person name="He K.-L."/>
            <person name="Gu B.-W."/>
            <person name="Han Z.-G."/>
            <person name="Shen Y."/>
            <person name="Gu J."/>
            <person name="Yu Y.-P."/>
            <person name="Xu S.-H."/>
            <person name="Wang Y.-X."/>
            <person name="Chen S.-J."/>
            <person name="Chen Z."/>
        </authorList>
    </citation>
    <scope>NUCLEOTIDE SEQUENCE [LARGE SCALE MRNA] (ISOFORM 2)</scope>
    <source>
        <tissue>Umbilical cord blood</tissue>
    </source>
</reference>
<reference key="2">
    <citation type="submission" date="2005-07" db="EMBL/GenBank/DDBJ databases">
        <authorList>
            <person name="Mural R.J."/>
            <person name="Istrail S."/>
            <person name="Sutton G.G."/>
            <person name="Florea L."/>
            <person name="Halpern A.L."/>
            <person name="Mobarry C.M."/>
            <person name="Lippert R."/>
            <person name="Walenz B."/>
            <person name="Shatkay H."/>
            <person name="Dew I."/>
            <person name="Miller J.R."/>
            <person name="Flanigan M.J."/>
            <person name="Edwards N.J."/>
            <person name="Bolanos R."/>
            <person name="Fasulo D."/>
            <person name="Halldorsson B.V."/>
            <person name="Hannenhalli S."/>
            <person name="Turner R."/>
            <person name="Yooseph S."/>
            <person name="Lu F."/>
            <person name="Nusskern D.R."/>
            <person name="Shue B.C."/>
            <person name="Zheng X.H."/>
            <person name="Zhong F."/>
            <person name="Delcher A.L."/>
            <person name="Huson D.H."/>
            <person name="Kravitz S.A."/>
            <person name="Mouchard L."/>
            <person name="Reinert K."/>
            <person name="Remington K.A."/>
            <person name="Clark A.G."/>
            <person name="Waterman M.S."/>
            <person name="Eichler E.E."/>
            <person name="Adams M.D."/>
            <person name="Hunkapiller M.W."/>
            <person name="Myers E.W."/>
            <person name="Venter J.C."/>
        </authorList>
    </citation>
    <scope>NUCLEOTIDE SEQUENCE [LARGE SCALE GENOMIC DNA]</scope>
</reference>
<reference key="3">
    <citation type="journal article" date="2004" name="Genome Res.">
        <title>The status, quality, and expansion of the NIH full-length cDNA project: the Mammalian Gene Collection (MGC).</title>
        <authorList>
            <consortium name="The MGC Project Team"/>
        </authorList>
    </citation>
    <scope>NUCLEOTIDE SEQUENCE [LARGE SCALE MRNA] (ISOFORM 1)</scope>
    <scope>VARIANTS GLY-93 AND ASN-537</scope>
    <source>
        <tissue>Testis</tissue>
    </source>
</reference>
<reference key="4">
    <citation type="journal article" date="1999" name="J. Biol. Chem.">
        <title>Molecular cloning of six novel Kruppel-like zinc finger genes from hematopoietic cells and identification of a novel transregulatory domain KRNB.</title>
        <authorList>
            <person name="Han Z.-G."/>
            <person name="Zhang Q.-H."/>
            <person name="Ye M."/>
            <person name="Kan L.-X."/>
            <person name="Gu B.-W."/>
            <person name="He K.-L."/>
            <person name="Shi S.-L."/>
            <person name="Zhou J."/>
            <person name="Fu G."/>
            <person name="Mao M."/>
            <person name="Chen S.-J."/>
            <person name="Yu L."/>
            <person name="Chen Z."/>
        </authorList>
    </citation>
    <scope>IDENTIFICATION</scope>
</reference>
<dbReference type="EMBL" id="AF054180">
    <property type="protein sequence ID" value="AAC39913.1"/>
    <property type="molecule type" value="mRNA"/>
</dbReference>
<dbReference type="EMBL" id="CH471106">
    <property type="protein sequence ID" value="EAW84960.1"/>
    <property type="molecule type" value="Genomic_DNA"/>
</dbReference>
<dbReference type="EMBL" id="BC043147">
    <property type="protein sequence ID" value="AAH43147.2"/>
    <property type="molecule type" value="mRNA"/>
</dbReference>
<dbReference type="EMBL" id="BC139749">
    <property type="protein sequence ID" value="AAI39750.1"/>
    <property type="molecule type" value="mRNA"/>
</dbReference>
<dbReference type="CCDS" id="CCDS32983.1">
    <molecule id="O75437-1"/>
</dbReference>
<dbReference type="RefSeq" id="NP_975011.3">
    <molecule id="O75437-1"/>
    <property type="nucleotide sequence ID" value="NM_203282.4"/>
</dbReference>
<dbReference type="SMR" id="O75437"/>
<dbReference type="BioGRID" id="114910">
    <property type="interactions" value="9"/>
</dbReference>
<dbReference type="FunCoup" id="O75437">
    <property type="interactions" value="79"/>
</dbReference>
<dbReference type="IntAct" id="O75437">
    <property type="interactions" value="9"/>
</dbReference>
<dbReference type="MINT" id="O75437"/>
<dbReference type="STRING" id="9606.ENSP00000349494"/>
<dbReference type="GlyGen" id="O75437">
    <property type="glycosylation" value="1 site, 1 O-linked glycan (1 site)"/>
</dbReference>
<dbReference type="iPTMnet" id="O75437"/>
<dbReference type="PhosphoSitePlus" id="O75437"/>
<dbReference type="BioMuta" id="ZNF254"/>
<dbReference type="jPOST" id="O75437"/>
<dbReference type="MassIVE" id="O75437"/>
<dbReference type="PaxDb" id="9606-ENSP00000349494"/>
<dbReference type="PeptideAtlas" id="O75437"/>
<dbReference type="ProteomicsDB" id="50003">
    <molecule id="O75437-1"/>
</dbReference>
<dbReference type="ProteomicsDB" id="50004">
    <molecule id="O75437-2"/>
</dbReference>
<dbReference type="Antibodypedia" id="28793">
    <property type="antibodies" value="38 antibodies from 10 providers"/>
</dbReference>
<dbReference type="DNASU" id="9534"/>
<dbReference type="Ensembl" id="ENST00000357002.5">
    <molecule id="O75437-1"/>
    <property type="protein sequence ID" value="ENSP00000349494.3"/>
    <property type="gene ID" value="ENSG00000213096.11"/>
</dbReference>
<dbReference type="GeneID" id="9534"/>
<dbReference type="KEGG" id="hsa:9534"/>
<dbReference type="MANE-Select" id="ENST00000357002.5">
    <property type="protein sequence ID" value="ENSP00000349494.3"/>
    <property type="RefSeq nucleotide sequence ID" value="NM_203282.4"/>
    <property type="RefSeq protein sequence ID" value="NP_975011.3"/>
</dbReference>
<dbReference type="UCSC" id="uc002nru.5">
    <molecule id="O75437-1"/>
    <property type="organism name" value="human"/>
</dbReference>
<dbReference type="AGR" id="HGNC:13047"/>
<dbReference type="CTD" id="9534"/>
<dbReference type="DisGeNET" id="9534"/>
<dbReference type="GeneCards" id="ZNF254"/>
<dbReference type="HGNC" id="HGNC:13047">
    <property type="gene designation" value="ZNF254"/>
</dbReference>
<dbReference type="HPA" id="ENSG00000213096">
    <property type="expression patterns" value="Low tissue specificity"/>
</dbReference>
<dbReference type="MIM" id="604768">
    <property type="type" value="gene"/>
</dbReference>
<dbReference type="neXtProt" id="NX_O75437"/>
<dbReference type="OpenTargets" id="ENSG00000213096"/>
<dbReference type="PharmGKB" id="PA37625"/>
<dbReference type="VEuPathDB" id="HostDB:ENSG00000213096"/>
<dbReference type="eggNOG" id="KOG1721">
    <property type="taxonomic scope" value="Eukaryota"/>
</dbReference>
<dbReference type="GeneTree" id="ENSGT00940000153236"/>
<dbReference type="HOGENOM" id="CLU_002678_44_5_1"/>
<dbReference type="InParanoid" id="O75437"/>
<dbReference type="OMA" id="DRITHWR"/>
<dbReference type="OrthoDB" id="9508331at2759"/>
<dbReference type="PAN-GO" id="O75437">
    <property type="GO annotations" value="4 GO annotations based on evolutionary models"/>
</dbReference>
<dbReference type="PhylomeDB" id="O75437"/>
<dbReference type="TreeFam" id="TF342117"/>
<dbReference type="PathwayCommons" id="O75437"/>
<dbReference type="Reactome" id="R-HSA-212436">
    <property type="pathway name" value="Generic Transcription Pathway"/>
</dbReference>
<dbReference type="SignaLink" id="O75437"/>
<dbReference type="BioGRID-ORCS" id="9534">
    <property type="hits" value="279 hits in 1105 CRISPR screens"/>
</dbReference>
<dbReference type="ChiTaRS" id="ZNF254">
    <property type="organism name" value="human"/>
</dbReference>
<dbReference type="GenomeRNAi" id="9534"/>
<dbReference type="Pharos" id="O75437">
    <property type="development level" value="Tdark"/>
</dbReference>
<dbReference type="PRO" id="PR:O75437"/>
<dbReference type="Proteomes" id="UP000005640">
    <property type="component" value="Chromosome 19"/>
</dbReference>
<dbReference type="RNAct" id="O75437">
    <property type="molecule type" value="protein"/>
</dbReference>
<dbReference type="Bgee" id="ENSG00000213096">
    <property type="expression patterns" value="Expressed in buccal mucosa cell and 163 other cell types or tissues"/>
</dbReference>
<dbReference type="ExpressionAtlas" id="O75437">
    <property type="expression patterns" value="baseline and differential"/>
</dbReference>
<dbReference type="GO" id="GO:0005634">
    <property type="term" value="C:nucleus"/>
    <property type="evidence" value="ECO:0000318"/>
    <property type="project" value="GO_Central"/>
</dbReference>
<dbReference type="GO" id="GO:0000981">
    <property type="term" value="F:DNA-binding transcription factor activity, RNA polymerase II-specific"/>
    <property type="evidence" value="ECO:0000318"/>
    <property type="project" value="GO_Central"/>
</dbReference>
<dbReference type="GO" id="GO:0000978">
    <property type="term" value="F:RNA polymerase II cis-regulatory region sequence-specific DNA binding"/>
    <property type="evidence" value="ECO:0000318"/>
    <property type="project" value="GO_Central"/>
</dbReference>
<dbReference type="GO" id="GO:0008270">
    <property type="term" value="F:zinc ion binding"/>
    <property type="evidence" value="ECO:0007669"/>
    <property type="project" value="UniProtKB-KW"/>
</dbReference>
<dbReference type="GO" id="GO:0000122">
    <property type="term" value="P:negative regulation of transcription by RNA polymerase II"/>
    <property type="evidence" value="ECO:0000304"/>
    <property type="project" value="ProtInc"/>
</dbReference>
<dbReference type="GO" id="GO:0006357">
    <property type="term" value="P:regulation of transcription by RNA polymerase II"/>
    <property type="evidence" value="ECO:0000318"/>
    <property type="project" value="GO_Central"/>
</dbReference>
<dbReference type="CDD" id="cd07765">
    <property type="entry name" value="KRAB_A-box"/>
    <property type="match status" value="1"/>
</dbReference>
<dbReference type="FunFam" id="3.30.160.60:FF:003915">
    <property type="match status" value="1"/>
</dbReference>
<dbReference type="FunFam" id="3.30.160.60:FF:000034">
    <property type="entry name" value="zinc finger protein 25"/>
    <property type="match status" value="3"/>
</dbReference>
<dbReference type="FunFam" id="3.30.160.60:FF:001868">
    <property type="entry name" value="Zinc finger protein 264"/>
    <property type="match status" value="2"/>
</dbReference>
<dbReference type="FunFam" id="3.30.160.60:FF:000120">
    <property type="entry name" value="Zinc finger protein 430"/>
    <property type="match status" value="5"/>
</dbReference>
<dbReference type="FunFam" id="3.30.160.60:FF:000362">
    <property type="entry name" value="Zinc finger protein 606"/>
    <property type="match status" value="2"/>
</dbReference>
<dbReference type="FunFam" id="3.30.160.60:FF:002679">
    <property type="entry name" value="Zinc finger protein 726"/>
    <property type="match status" value="1"/>
</dbReference>
<dbReference type="Gene3D" id="6.10.140.140">
    <property type="match status" value="1"/>
</dbReference>
<dbReference type="Gene3D" id="3.30.160.60">
    <property type="entry name" value="Classic Zinc Finger"/>
    <property type="match status" value="16"/>
</dbReference>
<dbReference type="InterPro" id="IPR050589">
    <property type="entry name" value="Ikaros_C2H2-ZF"/>
</dbReference>
<dbReference type="InterPro" id="IPR001909">
    <property type="entry name" value="KRAB"/>
</dbReference>
<dbReference type="InterPro" id="IPR036051">
    <property type="entry name" value="KRAB_dom_sf"/>
</dbReference>
<dbReference type="InterPro" id="IPR036236">
    <property type="entry name" value="Znf_C2H2_sf"/>
</dbReference>
<dbReference type="InterPro" id="IPR013087">
    <property type="entry name" value="Znf_C2H2_type"/>
</dbReference>
<dbReference type="PANTHER" id="PTHR24404">
    <property type="entry name" value="ZINC FINGER PROTEIN"/>
    <property type="match status" value="1"/>
</dbReference>
<dbReference type="PANTHER" id="PTHR24404:SF100">
    <property type="entry name" value="ZINC FINGER PROTEIN 501"/>
    <property type="match status" value="1"/>
</dbReference>
<dbReference type="Pfam" id="PF01352">
    <property type="entry name" value="KRAB"/>
    <property type="match status" value="1"/>
</dbReference>
<dbReference type="Pfam" id="PF00096">
    <property type="entry name" value="zf-C2H2"/>
    <property type="match status" value="12"/>
</dbReference>
<dbReference type="Pfam" id="PF13465">
    <property type="entry name" value="zf-H2C2_2"/>
    <property type="match status" value="1"/>
</dbReference>
<dbReference type="SMART" id="SM00349">
    <property type="entry name" value="KRAB"/>
    <property type="match status" value="1"/>
</dbReference>
<dbReference type="SMART" id="SM00355">
    <property type="entry name" value="ZnF_C2H2"/>
    <property type="match status" value="15"/>
</dbReference>
<dbReference type="SUPFAM" id="SSF57667">
    <property type="entry name" value="beta-beta-alpha zinc fingers"/>
    <property type="match status" value="10"/>
</dbReference>
<dbReference type="SUPFAM" id="SSF109640">
    <property type="entry name" value="KRAB domain (Kruppel-associated box)"/>
    <property type="match status" value="1"/>
</dbReference>
<dbReference type="PROSITE" id="PS50805">
    <property type="entry name" value="KRAB"/>
    <property type="match status" value="1"/>
</dbReference>
<dbReference type="PROSITE" id="PS00028">
    <property type="entry name" value="ZINC_FINGER_C2H2_1"/>
    <property type="match status" value="13"/>
</dbReference>
<dbReference type="PROSITE" id="PS50157">
    <property type="entry name" value="ZINC_FINGER_C2H2_2"/>
    <property type="match status" value="15"/>
</dbReference>
<protein>
    <recommendedName>
        <fullName>Zinc finger protein 254</fullName>
    </recommendedName>
    <alternativeName>
        <fullName>Bone marrow zinc finger 5</fullName>
        <shortName>BMZF-5</shortName>
    </alternativeName>
    <alternativeName>
        <fullName>Hematopoietic cell-derived zinc finger protein 1</fullName>
        <shortName>HD-ZNF1</shortName>
    </alternativeName>
    <alternativeName>
        <fullName>Zinc finger protein 539</fullName>
    </alternativeName>
    <alternativeName>
        <fullName>Zinc finger protein 91-like</fullName>
    </alternativeName>
</protein>
<keyword id="KW-0025">Alternative splicing</keyword>
<keyword id="KW-0238">DNA-binding</keyword>
<keyword id="KW-0479">Metal-binding</keyword>
<keyword id="KW-0539">Nucleus</keyword>
<keyword id="KW-1267">Proteomics identification</keyword>
<keyword id="KW-1185">Reference proteome</keyword>
<keyword id="KW-0677">Repeat</keyword>
<keyword id="KW-0804">Transcription</keyword>
<keyword id="KW-0805">Transcription regulation</keyword>
<keyword id="KW-0862">Zinc</keyword>
<keyword id="KW-0863">Zinc-finger</keyword>
<organism>
    <name type="scientific">Homo sapiens</name>
    <name type="common">Human</name>
    <dbReference type="NCBI Taxonomy" id="9606"/>
    <lineage>
        <taxon>Eukaryota</taxon>
        <taxon>Metazoa</taxon>
        <taxon>Chordata</taxon>
        <taxon>Craniata</taxon>
        <taxon>Vertebrata</taxon>
        <taxon>Euteleostomi</taxon>
        <taxon>Mammalia</taxon>
        <taxon>Eutheria</taxon>
        <taxon>Euarchontoglires</taxon>
        <taxon>Primates</taxon>
        <taxon>Haplorrhini</taxon>
        <taxon>Catarrhini</taxon>
        <taxon>Hominidae</taxon>
        <taxon>Homo</taxon>
    </lineage>
</organism>
<proteinExistence type="evidence at protein level"/>
<comment type="function">
    <text>May be involved in transcriptional regulation.</text>
</comment>
<comment type="subcellular location">
    <subcellularLocation>
        <location evidence="5">Nucleus</location>
    </subcellularLocation>
</comment>
<comment type="alternative products">
    <event type="alternative splicing"/>
    <isoform>
        <id>O75437-1</id>
        <name>1</name>
        <sequence type="displayed"/>
    </isoform>
    <isoform>
        <id>O75437-2</id>
        <name>2</name>
        <sequence type="described" ref="VSP_022010"/>
    </isoform>
</comment>
<comment type="similarity">
    <text evidence="5">Belongs to the krueppel C2H2-type zinc-finger protein family.</text>
</comment>
<gene>
    <name type="primary">ZNF254</name>
    <name type="synonym">BMZF5</name>
    <name type="synonym">ZNF539</name>
    <name type="synonym">ZNF91L</name>
</gene>
<name>ZN254_HUMAN</name>